<evidence type="ECO:0000269" key="1">
    <source>
    </source>
</evidence>
<evidence type="ECO:0000305" key="2"/>
<evidence type="ECO:0000305" key="3">
    <source>
    </source>
</evidence>
<dbReference type="PIR" id="A04610">
    <property type="entry name" value="CCPO"/>
</dbReference>
<dbReference type="SMR" id="P00061"/>
<dbReference type="FunCoup" id="P00061">
    <property type="interactions" value="1910"/>
</dbReference>
<dbReference type="STRING" id="4113.P00061"/>
<dbReference type="iPTMnet" id="P00061"/>
<dbReference type="PaxDb" id="4113-PGSC0003DMT400063997"/>
<dbReference type="eggNOG" id="KOG3453">
    <property type="taxonomic scope" value="Eukaryota"/>
</dbReference>
<dbReference type="InParanoid" id="P00061"/>
<dbReference type="Proteomes" id="UP000011115">
    <property type="component" value="Unassembled WGS sequence"/>
</dbReference>
<dbReference type="ExpressionAtlas" id="P00061">
    <property type="expression patterns" value="baseline"/>
</dbReference>
<dbReference type="GO" id="GO:0005758">
    <property type="term" value="C:mitochondrial intermembrane space"/>
    <property type="evidence" value="ECO:0000318"/>
    <property type="project" value="GO_Central"/>
</dbReference>
<dbReference type="GO" id="GO:0009055">
    <property type="term" value="F:electron transfer activity"/>
    <property type="evidence" value="ECO:0000318"/>
    <property type="project" value="GO_Central"/>
</dbReference>
<dbReference type="GO" id="GO:0020037">
    <property type="term" value="F:heme binding"/>
    <property type="evidence" value="ECO:0007669"/>
    <property type="project" value="InterPro"/>
</dbReference>
<dbReference type="GO" id="GO:0046872">
    <property type="term" value="F:metal ion binding"/>
    <property type="evidence" value="ECO:0007669"/>
    <property type="project" value="UniProtKB-KW"/>
</dbReference>
<dbReference type="GO" id="GO:0006123">
    <property type="term" value="P:mitochondrial electron transport, cytochrome c to oxygen"/>
    <property type="evidence" value="ECO:0000318"/>
    <property type="project" value="GO_Central"/>
</dbReference>
<dbReference type="GO" id="GO:0006122">
    <property type="term" value="P:mitochondrial electron transport, ubiquinol to cytochrome c"/>
    <property type="evidence" value="ECO:0000318"/>
    <property type="project" value="GO_Central"/>
</dbReference>
<dbReference type="FunFam" id="1.10.760.10:FF:000001">
    <property type="entry name" value="Cytochrome c iso-1"/>
    <property type="match status" value="1"/>
</dbReference>
<dbReference type="Gene3D" id="1.10.760.10">
    <property type="entry name" value="Cytochrome c-like domain"/>
    <property type="match status" value="1"/>
</dbReference>
<dbReference type="InterPro" id="IPR009056">
    <property type="entry name" value="Cyt_c-like_dom"/>
</dbReference>
<dbReference type="InterPro" id="IPR036909">
    <property type="entry name" value="Cyt_c-like_dom_sf"/>
</dbReference>
<dbReference type="InterPro" id="IPR002327">
    <property type="entry name" value="Cyt_c_1A/1B"/>
</dbReference>
<dbReference type="PANTHER" id="PTHR11961">
    <property type="entry name" value="CYTOCHROME C"/>
    <property type="match status" value="1"/>
</dbReference>
<dbReference type="Pfam" id="PF00034">
    <property type="entry name" value="Cytochrom_C"/>
    <property type="match status" value="1"/>
</dbReference>
<dbReference type="PRINTS" id="PR00604">
    <property type="entry name" value="CYTCHRMECIAB"/>
</dbReference>
<dbReference type="SUPFAM" id="SSF46626">
    <property type="entry name" value="Cytochrome c"/>
    <property type="match status" value="1"/>
</dbReference>
<dbReference type="PROSITE" id="PS51007">
    <property type="entry name" value="CYTC"/>
    <property type="match status" value="1"/>
</dbReference>
<name>CYC_SOLTU</name>
<reference key="1">
    <citation type="journal article" date="1974" name="FEBS Lett.">
        <title>The amino acid sequence of cytochrome c from Solanum tuberosum (potato).</title>
        <authorList>
            <person name="Martinez G."/>
            <person name="Rochat H."/>
            <person name="Ducet G."/>
        </authorList>
    </citation>
    <scope>PROTEIN SEQUENCE</scope>
    <scope>ACETYLATION AT ALA-1</scope>
    <scope>METHYLATION AT LYS-80 AND LYS-94</scope>
</reference>
<keyword id="KW-0007">Acetylation</keyword>
<keyword id="KW-0903">Direct protein sequencing</keyword>
<keyword id="KW-0249">Electron transport</keyword>
<keyword id="KW-0349">Heme</keyword>
<keyword id="KW-0408">Iron</keyword>
<keyword id="KW-0479">Metal-binding</keyword>
<keyword id="KW-0488">Methylation</keyword>
<keyword id="KW-0496">Mitochondrion</keyword>
<keyword id="KW-1185">Reference proteome</keyword>
<keyword id="KW-0679">Respiratory chain</keyword>
<keyword id="KW-0813">Transport</keyword>
<organism>
    <name type="scientific">Solanum tuberosum</name>
    <name type="common">Potato</name>
    <dbReference type="NCBI Taxonomy" id="4113"/>
    <lineage>
        <taxon>Eukaryota</taxon>
        <taxon>Viridiplantae</taxon>
        <taxon>Streptophyta</taxon>
        <taxon>Embryophyta</taxon>
        <taxon>Tracheophyta</taxon>
        <taxon>Spermatophyta</taxon>
        <taxon>Magnoliopsida</taxon>
        <taxon>eudicotyledons</taxon>
        <taxon>Gunneridae</taxon>
        <taxon>Pentapetalae</taxon>
        <taxon>asterids</taxon>
        <taxon>lamiids</taxon>
        <taxon>Solanales</taxon>
        <taxon>Solanaceae</taxon>
        <taxon>Solanoideae</taxon>
        <taxon>Solaneae</taxon>
        <taxon>Solanum</taxon>
    </lineage>
</organism>
<protein>
    <recommendedName>
        <fullName>Cytochrome c</fullName>
    </recommendedName>
</protein>
<feature type="chain" id="PRO_0000108309" description="Cytochrome c">
    <location>
        <begin position="1"/>
        <end position="111"/>
    </location>
</feature>
<feature type="binding site" description="covalent">
    <location>
        <position position="22"/>
    </location>
    <ligand>
        <name>heme c</name>
        <dbReference type="ChEBI" id="CHEBI:61717"/>
    </ligand>
</feature>
<feature type="binding site" description="covalent">
    <location>
        <position position="25"/>
    </location>
    <ligand>
        <name>heme c</name>
        <dbReference type="ChEBI" id="CHEBI:61717"/>
    </ligand>
</feature>
<feature type="binding site" description="axial binding residue">
    <location>
        <position position="26"/>
    </location>
    <ligand>
        <name>heme c</name>
        <dbReference type="ChEBI" id="CHEBI:61717"/>
    </ligand>
    <ligandPart>
        <name>Fe</name>
        <dbReference type="ChEBI" id="CHEBI:18248"/>
    </ligandPart>
</feature>
<feature type="binding site" description="axial binding residue">
    <location>
        <position position="88"/>
    </location>
    <ligand>
        <name>heme c</name>
        <dbReference type="ChEBI" id="CHEBI:61717"/>
    </ligand>
    <ligandPart>
        <name>Fe</name>
        <dbReference type="ChEBI" id="CHEBI:18248"/>
    </ligandPart>
</feature>
<feature type="modified residue" description="N-acetylalanine" evidence="1">
    <location>
        <position position="1"/>
    </location>
</feature>
<feature type="modified residue" description="N6,N6,N6-trimethyllysine" evidence="3">
    <location>
        <position position="80"/>
    </location>
</feature>
<feature type="modified residue" description="N6,N6,N6-trimethyllysine" evidence="3">
    <location>
        <position position="94"/>
    </location>
</feature>
<feature type="sequence variant">
    <original>E</original>
    <variation>D</variation>
    <location>
        <position position="98"/>
    </location>
</feature>
<sequence>ASFGEAPPGNPKAGEKIFKTKCAQCHTVDKGAGHKEGPNLNGLFGRQSGTTAGYSYSNANKNMAVTWGENTLYDYLLNPKKYIPGTKMVFPGLKKPQERADLIAYLKEATA</sequence>
<comment type="function">
    <text>Electron carrier protein. The oxidized form of the cytochrome c heme group can accept an electron from the heme group of the cytochrome c1 subunit of cytochrome reductase. Cytochrome c then transfers this electron to the cytochrome oxidase complex, the final protein carrier in the mitochondrial electron-transport chain.</text>
</comment>
<comment type="subcellular location">
    <subcellularLocation>
        <location>Mitochondrion intermembrane space</location>
    </subcellularLocation>
    <text>Loosely associated with the inner membrane.</text>
</comment>
<comment type="PTM">
    <text>Binds 1 heme c group covalently per subunit.</text>
</comment>
<comment type="similarity">
    <text evidence="2">Belongs to the cytochrome c family.</text>
</comment>
<comment type="online information" name="Protein Spotlight">
    <link uri="https://www.proteinspotlight.org/back_issues/076"/>
    <text>Life shuttle - Issue 76 of November 2006</text>
</comment>
<proteinExistence type="evidence at protein level"/>
<accession>P00061</accession>